<gene>
    <name type="primary">CESA5</name>
    <name type="ordered locus">Os03g0837100</name>
    <name type="ordered locus">LOC_Os03g62090</name>
    <name type="ORF">OsJ_012702</name>
    <name type="ORF">OSJNBa0042I09.26</name>
</gene>
<name>CESA5_ORYSJ</name>
<organism>
    <name type="scientific">Oryza sativa subsp. japonica</name>
    <name type="common">Rice</name>
    <dbReference type="NCBI Taxonomy" id="39947"/>
    <lineage>
        <taxon>Eukaryota</taxon>
        <taxon>Viridiplantae</taxon>
        <taxon>Streptophyta</taxon>
        <taxon>Embryophyta</taxon>
        <taxon>Tracheophyta</taxon>
        <taxon>Spermatophyta</taxon>
        <taxon>Magnoliopsida</taxon>
        <taxon>Liliopsida</taxon>
        <taxon>Poales</taxon>
        <taxon>Poaceae</taxon>
        <taxon>BOP clade</taxon>
        <taxon>Oryzoideae</taxon>
        <taxon>Oryzeae</taxon>
        <taxon>Oryzinae</taxon>
        <taxon>Oryza</taxon>
        <taxon>Oryza sativa</taxon>
    </lineage>
</organism>
<dbReference type="EC" id="2.4.1.12" evidence="5"/>
<dbReference type="EMBL" id="AC104487">
    <property type="protein sequence ID" value="AAO41140.1"/>
    <property type="molecule type" value="Genomic_DNA"/>
</dbReference>
<dbReference type="EMBL" id="DP000009">
    <property type="protein sequence ID" value="ABF99771.1"/>
    <property type="molecule type" value="Genomic_DNA"/>
</dbReference>
<dbReference type="EMBL" id="AP008209">
    <property type="protein sequence ID" value="BAF13744.1"/>
    <property type="molecule type" value="Genomic_DNA"/>
</dbReference>
<dbReference type="EMBL" id="AP014959">
    <property type="protein sequence ID" value="BAS87262.1"/>
    <property type="molecule type" value="Genomic_DNA"/>
</dbReference>
<dbReference type="EMBL" id="CM000140">
    <property type="protein sequence ID" value="EAZ29219.1"/>
    <property type="molecule type" value="Genomic_DNA"/>
</dbReference>
<dbReference type="EMBL" id="AK100877">
    <property type="status" value="NOT_ANNOTATED_CDS"/>
    <property type="molecule type" value="mRNA"/>
</dbReference>
<dbReference type="RefSeq" id="XP_015631790.1">
    <property type="nucleotide sequence ID" value="XM_015776304.1"/>
</dbReference>
<dbReference type="SMR" id="Q851L8"/>
<dbReference type="FunCoup" id="Q851L8">
    <property type="interactions" value="197"/>
</dbReference>
<dbReference type="STRING" id="39947.Q851L8"/>
<dbReference type="CAZy" id="GT2">
    <property type="family name" value="Glycosyltransferase Family 2"/>
</dbReference>
<dbReference type="PaxDb" id="39947-Q851L8"/>
<dbReference type="EnsemblPlants" id="Os03t0837100-01">
    <property type="protein sequence ID" value="Os03t0837100-01"/>
    <property type="gene ID" value="Os03g0837100"/>
</dbReference>
<dbReference type="Gramene" id="Os03t0837100-01">
    <property type="protein sequence ID" value="Os03t0837100-01"/>
    <property type="gene ID" value="Os03g0837100"/>
</dbReference>
<dbReference type="KEGG" id="dosa:Os03g0837100"/>
<dbReference type="eggNOG" id="ENOG502QQGG">
    <property type="taxonomic scope" value="Eukaryota"/>
</dbReference>
<dbReference type="HOGENOM" id="CLU_001418_0_0_1"/>
<dbReference type="InParanoid" id="Q851L8"/>
<dbReference type="OMA" id="HANHTIN"/>
<dbReference type="OrthoDB" id="72851at2759"/>
<dbReference type="UniPathway" id="UPA00695"/>
<dbReference type="Proteomes" id="UP000000763">
    <property type="component" value="Chromosome 3"/>
</dbReference>
<dbReference type="Proteomes" id="UP000007752">
    <property type="component" value="Chromosome 3"/>
</dbReference>
<dbReference type="Proteomes" id="UP000059680">
    <property type="component" value="Chromosome 3"/>
</dbReference>
<dbReference type="ExpressionAtlas" id="Q851L8">
    <property type="expression patterns" value="baseline and differential"/>
</dbReference>
<dbReference type="GO" id="GO:0005886">
    <property type="term" value="C:plasma membrane"/>
    <property type="evidence" value="ECO:0000318"/>
    <property type="project" value="GO_Central"/>
</dbReference>
<dbReference type="GO" id="GO:0016760">
    <property type="term" value="F:cellulose synthase (UDP-forming) activity"/>
    <property type="evidence" value="ECO:0007669"/>
    <property type="project" value="UniProtKB-EC"/>
</dbReference>
<dbReference type="GO" id="GO:0016759">
    <property type="term" value="F:cellulose synthase activity"/>
    <property type="evidence" value="ECO:0000318"/>
    <property type="project" value="GO_Central"/>
</dbReference>
<dbReference type="GO" id="GO:0008270">
    <property type="term" value="F:zinc ion binding"/>
    <property type="evidence" value="ECO:0007669"/>
    <property type="project" value="UniProtKB-KW"/>
</dbReference>
<dbReference type="GO" id="GO:0071555">
    <property type="term" value="P:cell wall organization"/>
    <property type="evidence" value="ECO:0007669"/>
    <property type="project" value="UniProtKB-KW"/>
</dbReference>
<dbReference type="GO" id="GO:0030244">
    <property type="term" value="P:cellulose biosynthetic process"/>
    <property type="evidence" value="ECO:0000318"/>
    <property type="project" value="GO_Central"/>
</dbReference>
<dbReference type="GO" id="GO:0009833">
    <property type="term" value="P:plant-type primary cell wall biogenesis"/>
    <property type="evidence" value="ECO:0000318"/>
    <property type="project" value="GO_Central"/>
</dbReference>
<dbReference type="CDD" id="cd16617">
    <property type="entry name" value="mRING-HC-C4C4_CesA"/>
    <property type="match status" value="1"/>
</dbReference>
<dbReference type="FunFam" id="3.30.40.10:FF:000031">
    <property type="entry name" value="Cellulose synthase"/>
    <property type="match status" value="1"/>
</dbReference>
<dbReference type="FunFam" id="3.90.550.10:FF:000009">
    <property type="entry name" value="Cellulose synthase"/>
    <property type="match status" value="1"/>
</dbReference>
<dbReference type="Gene3D" id="3.90.550.10">
    <property type="entry name" value="Spore Coat Polysaccharide Biosynthesis Protein SpsA, Chain A"/>
    <property type="match status" value="1"/>
</dbReference>
<dbReference type="Gene3D" id="3.30.40.10">
    <property type="entry name" value="Zinc/RING finger domain, C3HC4 (zinc finger)"/>
    <property type="match status" value="1"/>
</dbReference>
<dbReference type="InterPro" id="IPR005150">
    <property type="entry name" value="Cellulose_synth"/>
</dbReference>
<dbReference type="InterPro" id="IPR027934">
    <property type="entry name" value="CES_Znf_RING"/>
</dbReference>
<dbReference type="InterPro" id="IPR029044">
    <property type="entry name" value="Nucleotide-diphossugar_trans"/>
</dbReference>
<dbReference type="InterPro" id="IPR001841">
    <property type="entry name" value="Znf_RING"/>
</dbReference>
<dbReference type="InterPro" id="IPR013083">
    <property type="entry name" value="Znf_RING/FYVE/PHD"/>
</dbReference>
<dbReference type="PANTHER" id="PTHR13301">
    <property type="entry name" value="X-BOX TRANSCRIPTION FACTOR-RELATED"/>
    <property type="match status" value="1"/>
</dbReference>
<dbReference type="Pfam" id="PF03552">
    <property type="entry name" value="Cellulose_synt"/>
    <property type="match status" value="1"/>
</dbReference>
<dbReference type="Pfam" id="PF14569">
    <property type="entry name" value="zf-UDP"/>
    <property type="match status" value="1"/>
</dbReference>
<dbReference type="SUPFAM" id="SSF53448">
    <property type="entry name" value="Nucleotide-diphospho-sugar transferases"/>
    <property type="match status" value="1"/>
</dbReference>
<dbReference type="SUPFAM" id="SSF57850">
    <property type="entry name" value="RING/U-box"/>
    <property type="match status" value="1"/>
</dbReference>
<dbReference type="PROSITE" id="PS50089">
    <property type="entry name" value="ZF_RING_2"/>
    <property type="match status" value="1"/>
</dbReference>
<reference key="1">
    <citation type="journal article" date="2005" name="Genome Res.">
        <title>Sequence, annotation, and analysis of synteny between rice chromosome 3 and diverged grass species.</title>
        <authorList>
            <consortium name="The rice chromosome 3 sequencing consortium"/>
            <person name="Buell C.R."/>
            <person name="Yuan Q."/>
            <person name="Ouyang S."/>
            <person name="Liu J."/>
            <person name="Zhu W."/>
            <person name="Wang A."/>
            <person name="Maiti R."/>
            <person name="Haas B."/>
            <person name="Wortman J."/>
            <person name="Pertea M."/>
            <person name="Jones K.M."/>
            <person name="Kim M."/>
            <person name="Overton L."/>
            <person name="Tsitrin T."/>
            <person name="Fadrosh D."/>
            <person name="Bera J."/>
            <person name="Weaver B."/>
            <person name="Jin S."/>
            <person name="Johri S."/>
            <person name="Reardon M."/>
            <person name="Webb K."/>
            <person name="Hill J."/>
            <person name="Moffat K."/>
            <person name="Tallon L."/>
            <person name="Van Aken S."/>
            <person name="Lewis M."/>
            <person name="Utterback T."/>
            <person name="Feldblyum T."/>
            <person name="Zismann V."/>
            <person name="Iobst S."/>
            <person name="Hsiao J."/>
            <person name="de Vazeille A.R."/>
            <person name="Salzberg S.L."/>
            <person name="White O."/>
            <person name="Fraser C.M."/>
            <person name="Yu Y."/>
            <person name="Kim H."/>
            <person name="Rambo T."/>
            <person name="Currie J."/>
            <person name="Collura K."/>
            <person name="Kernodle-Thompson S."/>
            <person name="Wei F."/>
            <person name="Kudrna K."/>
            <person name="Ammiraju J.S.S."/>
            <person name="Luo M."/>
            <person name="Goicoechea J.L."/>
            <person name="Wing R.A."/>
            <person name="Henry D."/>
            <person name="Oates R."/>
            <person name="Palmer M."/>
            <person name="Pries G."/>
            <person name="Saski C."/>
            <person name="Simmons J."/>
            <person name="Soderlund C."/>
            <person name="Nelson W."/>
            <person name="de la Bastide M."/>
            <person name="Spiegel L."/>
            <person name="Nascimento L."/>
            <person name="Huang E."/>
            <person name="Preston R."/>
            <person name="Zutavern T."/>
            <person name="Palmer L."/>
            <person name="O'Shaughnessy A."/>
            <person name="Dike S."/>
            <person name="McCombie W.R."/>
            <person name="Minx P."/>
            <person name="Cordum H."/>
            <person name="Wilson R."/>
            <person name="Jin W."/>
            <person name="Lee H.R."/>
            <person name="Jiang J."/>
            <person name="Jackson S."/>
        </authorList>
    </citation>
    <scope>NUCLEOTIDE SEQUENCE [LARGE SCALE GENOMIC DNA]</scope>
    <source>
        <strain>cv. Nipponbare</strain>
    </source>
</reference>
<reference key="2">
    <citation type="journal article" date="2005" name="Nature">
        <title>The map-based sequence of the rice genome.</title>
        <authorList>
            <consortium name="International rice genome sequencing project (IRGSP)"/>
        </authorList>
    </citation>
    <scope>NUCLEOTIDE SEQUENCE [LARGE SCALE GENOMIC DNA]</scope>
    <source>
        <strain>cv. Nipponbare</strain>
    </source>
</reference>
<reference key="3">
    <citation type="journal article" date="2008" name="Nucleic Acids Res.">
        <title>The rice annotation project database (RAP-DB): 2008 update.</title>
        <authorList>
            <consortium name="The rice annotation project (RAP)"/>
        </authorList>
    </citation>
    <scope>GENOME REANNOTATION</scope>
    <source>
        <strain>cv. Nipponbare</strain>
    </source>
</reference>
<reference key="4">
    <citation type="journal article" date="2013" name="Rice">
        <title>Improvement of the Oryza sativa Nipponbare reference genome using next generation sequence and optical map data.</title>
        <authorList>
            <person name="Kawahara Y."/>
            <person name="de la Bastide M."/>
            <person name="Hamilton J.P."/>
            <person name="Kanamori H."/>
            <person name="McCombie W.R."/>
            <person name="Ouyang S."/>
            <person name="Schwartz D.C."/>
            <person name="Tanaka T."/>
            <person name="Wu J."/>
            <person name="Zhou S."/>
            <person name="Childs K.L."/>
            <person name="Davidson R.M."/>
            <person name="Lin H."/>
            <person name="Quesada-Ocampo L."/>
            <person name="Vaillancourt B."/>
            <person name="Sakai H."/>
            <person name="Lee S.S."/>
            <person name="Kim J."/>
            <person name="Numa H."/>
            <person name="Itoh T."/>
            <person name="Buell C.R."/>
            <person name="Matsumoto T."/>
        </authorList>
    </citation>
    <scope>GENOME REANNOTATION</scope>
    <source>
        <strain>cv. Nipponbare</strain>
    </source>
</reference>
<reference key="5">
    <citation type="journal article" date="2005" name="PLoS Biol.">
        <title>The genomes of Oryza sativa: a history of duplications.</title>
        <authorList>
            <person name="Yu J."/>
            <person name="Wang J."/>
            <person name="Lin W."/>
            <person name="Li S."/>
            <person name="Li H."/>
            <person name="Zhou J."/>
            <person name="Ni P."/>
            <person name="Dong W."/>
            <person name="Hu S."/>
            <person name="Zeng C."/>
            <person name="Zhang J."/>
            <person name="Zhang Y."/>
            <person name="Li R."/>
            <person name="Xu Z."/>
            <person name="Li S."/>
            <person name="Li X."/>
            <person name="Zheng H."/>
            <person name="Cong L."/>
            <person name="Lin L."/>
            <person name="Yin J."/>
            <person name="Geng J."/>
            <person name="Li G."/>
            <person name="Shi J."/>
            <person name="Liu J."/>
            <person name="Lv H."/>
            <person name="Li J."/>
            <person name="Wang J."/>
            <person name="Deng Y."/>
            <person name="Ran L."/>
            <person name="Shi X."/>
            <person name="Wang X."/>
            <person name="Wu Q."/>
            <person name="Li C."/>
            <person name="Ren X."/>
            <person name="Wang J."/>
            <person name="Wang X."/>
            <person name="Li D."/>
            <person name="Liu D."/>
            <person name="Zhang X."/>
            <person name="Ji Z."/>
            <person name="Zhao W."/>
            <person name="Sun Y."/>
            <person name="Zhang Z."/>
            <person name="Bao J."/>
            <person name="Han Y."/>
            <person name="Dong L."/>
            <person name="Ji J."/>
            <person name="Chen P."/>
            <person name="Wu S."/>
            <person name="Liu J."/>
            <person name="Xiao Y."/>
            <person name="Bu D."/>
            <person name="Tan J."/>
            <person name="Yang L."/>
            <person name="Ye C."/>
            <person name="Zhang J."/>
            <person name="Xu J."/>
            <person name="Zhou Y."/>
            <person name="Yu Y."/>
            <person name="Zhang B."/>
            <person name="Zhuang S."/>
            <person name="Wei H."/>
            <person name="Liu B."/>
            <person name="Lei M."/>
            <person name="Yu H."/>
            <person name="Li Y."/>
            <person name="Xu H."/>
            <person name="Wei S."/>
            <person name="He X."/>
            <person name="Fang L."/>
            <person name="Zhang Z."/>
            <person name="Zhang Y."/>
            <person name="Huang X."/>
            <person name="Su Z."/>
            <person name="Tong W."/>
            <person name="Li J."/>
            <person name="Tong Z."/>
            <person name="Li S."/>
            <person name="Ye J."/>
            <person name="Wang L."/>
            <person name="Fang L."/>
            <person name="Lei T."/>
            <person name="Chen C.-S."/>
            <person name="Chen H.-C."/>
            <person name="Xu Z."/>
            <person name="Li H."/>
            <person name="Huang H."/>
            <person name="Zhang F."/>
            <person name="Xu H."/>
            <person name="Li N."/>
            <person name="Zhao C."/>
            <person name="Li S."/>
            <person name="Dong L."/>
            <person name="Huang Y."/>
            <person name="Li L."/>
            <person name="Xi Y."/>
            <person name="Qi Q."/>
            <person name="Li W."/>
            <person name="Zhang B."/>
            <person name="Hu W."/>
            <person name="Zhang Y."/>
            <person name="Tian X."/>
            <person name="Jiao Y."/>
            <person name="Liang X."/>
            <person name="Jin J."/>
            <person name="Gao L."/>
            <person name="Zheng W."/>
            <person name="Hao B."/>
            <person name="Liu S.-M."/>
            <person name="Wang W."/>
            <person name="Yuan L."/>
            <person name="Cao M."/>
            <person name="McDermott J."/>
            <person name="Samudrala R."/>
            <person name="Wang J."/>
            <person name="Wong G.K.-S."/>
            <person name="Yang H."/>
        </authorList>
    </citation>
    <scope>NUCLEOTIDE SEQUENCE [LARGE SCALE GENOMIC DNA]</scope>
    <source>
        <strain>cv. Nipponbare</strain>
    </source>
</reference>
<reference key="6">
    <citation type="journal article" date="2003" name="Science">
        <title>Collection, mapping, and annotation of over 28,000 cDNA clones from japonica rice.</title>
        <authorList>
            <consortium name="The rice full-length cDNA consortium"/>
        </authorList>
    </citation>
    <scope>NUCLEOTIDE SEQUENCE [LARGE SCALE MRNA]</scope>
    <source>
        <strain>cv. Nipponbare</strain>
    </source>
</reference>
<accession>Q851L8</accession>
<accession>A0A0P0W5S6</accession>
<sequence length="1092" mass="123396">MEASAGLVAGSHNRNELVVIRRDGEPGPKPVKHTNGQVCQICGDDVGLTPDGEPFVACNECAFPVCRDCYEYERREGTQNCPQCKTRFKRLKGCARVPGDEEEEDVDDLENEFNWRDKTDSQYVAESMLHGHMSYGRGGDLDGVPQHFQPIPNVPLLTNGEMADDIPPEQHALVPSFMGGGGKRIHPLPYADPNLPVQPRSMDPSKDLAAYGYGSVAWKERMESWKQKQERLHQMRNDGGGKDWDGDGDDADLPLMDEARQPLSRKIPISSSLVNPYRMIIIIRLVVLGFFFHYRVMHPVPDAFALWLISVICEIWFAMSWILDQFPKWFPIERETYLDRLTLRFDKEGQQSQLAPVDFFVSTVDPMKEPPLVTANTVLSILAVDYPVDKVSCYVSDDGAAMLTFEALSETSEFAKKWVPFCKRYSLEPRAPEWYFQQKIDYLKDKVAPNFVRERRAMKREYEEFKVRINALVAKAQKVPEEGWTMQDGTPWPGNNVRDHPGMIQVFLGQSGGHDVEGNELPRLVYVSREKRPGYNHHKKAGAMNALVRVSAVLTNAPYMLNLDCDHYINNSKAIKEAMCFMMDPLVGKKVCYVQFPQRFDGIDRHDRYANRNVVFFDINMKGLDGIQGPIYVGTGCVFRRQALYGYDAPKSKKPPSRTCNCWPKWCICCCCFGNRTNKKKTAKPKTEKKKRLFFKRAENQSPAYALGEIDEGAPGAENEKAGIVNQQKLEKKFGQSSVFVASTLLENGGTLKSASPASLLKEAIHVISCGYEDKTDWGKEIGWIYGSVTEDILTGFKMHCHGWRSIYCIPKRAAFKGSAPLNLSDRLHQVLRWALGSIEIFFSNHCPLWYGYGGGLKCLERFSYINSIVYPWTSIPLLAYCTLPAICLLTGKFITPELTNIASLWFMSLFICIFATGILEMRWSGVGIDDWWRNEQFWVIGGVSSHLFAVFQGLLKVIAGIDTSFTVTSKGGDDEEFSELYTFKWTTLLIPPTTLLLLNFIGVVAGVSNAINNGYESWGPLFGKLFFAFWVIVHLYPFLKGLVGRQNRTPTIVIVWSILLASIFSLLWVRIDPFLAKNDGPLLEECGLDCN</sequence>
<protein>
    <recommendedName>
        <fullName>Probable cellulose synthase A catalytic subunit 5 [UDP-forming]</fullName>
        <ecNumber evidence="5">2.4.1.12</ecNumber>
    </recommendedName>
    <alternativeName>
        <fullName>OsCesA5</fullName>
    </alternativeName>
</protein>
<proteinExistence type="evidence at transcript level"/>
<comment type="function">
    <text evidence="2">Probable catalytic subunit of cellulose synthase terminal complexes ('rosettes'), required for beta-1,4-glucan microfibril crystallization, a major mechanism of the cell wall formation.</text>
</comment>
<comment type="catalytic activity">
    <reaction evidence="5">
        <text>[(1-&gt;4)-beta-D-glucosyl](n) + UDP-alpha-D-glucose = [(1-&gt;4)-beta-D-glucosyl](n+1) + UDP + H(+)</text>
        <dbReference type="Rhea" id="RHEA:19929"/>
        <dbReference type="Rhea" id="RHEA-COMP:10033"/>
        <dbReference type="Rhea" id="RHEA-COMP:10034"/>
        <dbReference type="ChEBI" id="CHEBI:15378"/>
        <dbReference type="ChEBI" id="CHEBI:18246"/>
        <dbReference type="ChEBI" id="CHEBI:58223"/>
        <dbReference type="ChEBI" id="CHEBI:58885"/>
        <dbReference type="EC" id="2.4.1.12"/>
    </reaction>
</comment>
<comment type="cofactor">
    <cofactor evidence="1">
        <name>Mn(2+)</name>
        <dbReference type="ChEBI" id="CHEBI:29035"/>
    </cofactor>
</comment>
<comment type="cofactor">
    <cofactor evidence="2">
        <name>Zn(2+)</name>
        <dbReference type="ChEBI" id="CHEBI:29105"/>
    </cofactor>
    <text evidence="2">Binds 2 Zn(2+) ions per subunit.</text>
</comment>
<comment type="pathway">
    <text>Glycan metabolism; plant cellulose biosynthesis.</text>
</comment>
<comment type="subcellular location">
    <subcellularLocation>
        <location evidence="5">Cell membrane</location>
        <topology evidence="5">Multi-pass membrane protein</topology>
    </subcellularLocation>
</comment>
<comment type="similarity">
    <text evidence="5">Belongs to the glycosyltransferase 2 family. Plant cellulose synthase subfamily.</text>
</comment>
<feature type="chain" id="PRO_0000319365" description="Probable cellulose synthase A catalytic subunit 5 [UDP-forming]">
    <location>
        <begin position="1"/>
        <end position="1092"/>
    </location>
</feature>
<feature type="topological domain" description="Cytoplasmic" evidence="3">
    <location>
        <begin position="1"/>
        <end position="279"/>
    </location>
</feature>
<feature type="transmembrane region" description="Helical" evidence="3">
    <location>
        <begin position="280"/>
        <end position="300"/>
    </location>
</feature>
<feature type="topological domain" description="Extracellular" evidence="3">
    <location>
        <begin position="301"/>
        <end position="302"/>
    </location>
</feature>
<feature type="transmembrane region" description="Helical" evidence="3">
    <location>
        <begin position="303"/>
        <end position="323"/>
    </location>
</feature>
<feature type="topological domain" description="Cytoplasmic" evidence="3">
    <location>
        <begin position="324"/>
        <end position="868"/>
    </location>
</feature>
<feature type="transmembrane region" description="Helical" evidence="3">
    <location>
        <begin position="869"/>
        <end position="889"/>
    </location>
</feature>
<feature type="topological domain" description="Extracellular" evidence="3">
    <location>
        <begin position="890"/>
        <end position="901"/>
    </location>
</feature>
<feature type="transmembrane region" description="Helical" evidence="3">
    <location>
        <begin position="902"/>
        <end position="922"/>
    </location>
</feature>
<feature type="topological domain" description="Cytoplasmic" evidence="3">
    <location>
        <begin position="923"/>
        <end position="938"/>
    </location>
</feature>
<feature type="transmembrane region" description="Helical" evidence="3">
    <location>
        <begin position="939"/>
        <end position="959"/>
    </location>
</feature>
<feature type="topological domain" description="Extracellular" evidence="3">
    <location>
        <begin position="960"/>
        <end position="987"/>
    </location>
</feature>
<feature type="transmembrane region" description="Helical" evidence="3">
    <location>
        <begin position="988"/>
        <end position="1008"/>
    </location>
</feature>
<feature type="topological domain" description="Cytoplasmic" evidence="3">
    <location>
        <begin position="1009"/>
        <end position="1019"/>
    </location>
</feature>
<feature type="transmembrane region" description="Helical" evidence="3">
    <location>
        <begin position="1020"/>
        <end position="1040"/>
    </location>
</feature>
<feature type="topological domain" description="Extracellular" evidence="3">
    <location>
        <begin position="1041"/>
        <end position="1049"/>
    </location>
</feature>
<feature type="transmembrane region" description="Helical" evidence="3">
    <location>
        <begin position="1050"/>
        <end position="1070"/>
    </location>
</feature>
<feature type="topological domain" description="Cytoplasmic" evidence="3">
    <location>
        <begin position="1071"/>
        <end position="1092"/>
    </location>
</feature>
<feature type="zinc finger region" description="RING-type; degenerate" evidence="4">
    <location>
        <begin position="39"/>
        <end position="85"/>
    </location>
</feature>
<feature type="coiled-coil region" evidence="3">
    <location>
        <begin position="450"/>
        <end position="479"/>
    </location>
</feature>
<feature type="active site" evidence="3">
    <location>
        <position position="398"/>
    </location>
</feature>
<feature type="active site" evidence="3">
    <location>
        <position position="792"/>
    </location>
</feature>
<feature type="binding site" evidence="2">
    <location>
        <position position="39"/>
    </location>
    <ligand>
        <name>Zn(2+)</name>
        <dbReference type="ChEBI" id="CHEBI:29105"/>
        <label>1</label>
    </ligand>
</feature>
<feature type="binding site" evidence="2">
    <location>
        <position position="42"/>
    </location>
    <ligand>
        <name>Zn(2+)</name>
        <dbReference type="ChEBI" id="CHEBI:29105"/>
        <label>1</label>
    </ligand>
</feature>
<feature type="binding site" evidence="2">
    <location>
        <position position="58"/>
    </location>
    <ligand>
        <name>Zn(2+)</name>
        <dbReference type="ChEBI" id="CHEBI:29105"/>
        <label>2</label>
    </ligand>
</feature>
<feature type="binding site" evidence="2">
    <location>
        <position position="61"/>
    </location>
    <ligand>
        <name>Zn(2+)</name>
        <dbReference type="ChEBI" id="CHEBI:29105"/>
        <label>2</label>
    </ligand>
</feature>
<feature type="binding site" evidence="2">
    <location>
        <position position="66"/>
    </location>
    <ligand>
        <name>Zn(2+)</name>
        <dbReference type="ChEBI" id="CHEBI:29105"/>
        <label>1</label>
    </ligand>
</feature>
<feature type="binding site" evidence="2">
    <location>
        <position position="69"/>
    </location>
    <ligand>
        <name>Zn(2+)</name>
        <dbReference type="ChEBI" id="CHEBI:29105"/>
        <label>1</label>
    </ligand>
</feature>
<feature type="binding site" evidence="2">
    <location>
        <position position="81"/>
    </location>
    <ligand>
        <name>Zn(2+)</name>
        <dbReference type="ChEBI" id="CHEBI:29105"/>
        <label>2</label>
    </ligand>
</feature>
<feature type="binding site" evidence="2">
    <location>
        <position position="84"/>
    </location>
    <ligand>
        <name>Zn(2+)</name>
        <dbReference type="ChEBI" id="CHEBI:29105"/>
        <label>2</label>
    </ligand>
</feature>
<feature type="binding site" evidence="1">
    <location>
        <position position="362"/>
    </location>
    <ligand>
        <name>UDP-alpha-D-glucose</name>
        <dbReference type="ChEBI" id="CHEBI:58885"/>
    </ligand>
</feature>
<feature type="binding site" evidence="1">
    <location>
        <position position="368"/>
    </location>
    <ligand>
        <name>UDP-alpha-D-glucose</name>
        <dbReference type="ChEBI" id="CHEBI:58885"/>
    </ligand>
</feature>
<feature type="binding site" evidence="1">
    <location>
        <position position="369"/>
    </location>
    <ligand>
        <name>UDP-alpha-D-glucose</name>
        <dbReference type="ChEBI" id="CHEBI:58885"/>
    </ligand>
</feature>
<feature type="binding site" evidence="1">
    <location>
        <position position="398"/>
    </location>
    <ligand>
        <name>UDP-alpha-D-glucose</name>
        <dbReference type="ChEBI" id="CHEBI:58885"/>
    </ligand>
</feature>
<feature type="binding site" evidence="1">
    <location>
        <position position="539"/>
    </location>
    <ligand>
        <name>UDP-alpha-D-glucose</name>
        <dbReference type="ChEBI" id="CHEBI:58885"/>
    </ligand>
</feature>
<feature type="binding site" evidence="1">
    <location>
        <position position="540"/>
    </location>
    <ligand>
        <name>Mn(2+)</name>
        <dbReference type="ChEBI" id="CHEBI:29035"/>
    </ligand>
</feature>
<feature type="binding site" evidence="1">
    <location>
        <position position="564"/>
    </location>
    <ligand>
        <name>Mn(2+)</name>
        <dbReference type="ChEBI" id="CHEBI:29035"/>
    </ligand>
</feature>
<feature type="sequence conflict" description="In Ref. 6; AK100877." evidence="5" ref="6">
    <original>N</original>
    <variation>S</variation>
    <location>
        <position position="901"/>
    </location>
</feature>
<keyword id="KW-1003">Cell membrane</keyword>
<keyword id="KW-0961">Cell wall biogenesis/degradation</keyword>
<keyword id="KW-0135">Cellulose biosynthesis</keyword>
<keyword id="KW-0175">Coiled coil</keyword>
<keyword id="KW-0328">Glycosyltransferase</keyword>
<keyword id="KW-0464">Manganese</keyword>
<keyword id="KW-0472">Membrane</keyword>
<keyword id="KW-0479">Metal-binding</keyword>
<keyword id="KW-1185">Reference proteome</keyword>
<keyword id="KW-0808">Transferase</keyword>
<keyword id="KW-0812">Transmembrane</keyword>
<keyword id="KW-1133">Transmembrane helix</keyword>
<keyword id="KW-0862">Zinc</keyword>
<keyword id="KW-0863">Zinc-finger</keyword>
<evidence type="ECO:0000250" key="1">
    <source>
        <dbReference type="UniProtKB" id="Q941L0"/>
    </source>
</evidence>
<evidence type="ECO:0000250" key="2">
    <source>
        <dbReference type="UniProtKB" id="Q9SWW6"/>
    </source>
</evidence>
<evidence type="ECO:0000255" key="3"/>
<evidence type="ECO:0000255" key="4">
    <source>
        <dbReference type="PROSITE-ProRule" id="PRU00175"/>
    </source>
</evidence>
<evidence type="ECO:0000305" key="5"/>